<name>CLPX_SHEHH</name>
<protein>
    <recommendedName>
        <fullName evidence="1">ATP-dependent Clp protease ATP-binding subunit ClpX</fullName>
    </recommendedName>
</protein>
<reference key="1">
    <citation type="submission" date="2008-01" db="EMBL/GenBank/DDBJ databases">
        <title>Complete sequence of Shewanella halifaxensis HAW-EB4.</title>
        <authorList>
            <consortium name="US DOE Joint Genome Institute"/>
            <person name="Copeland A."/>
            <person name="Lucas S."/>
            <person name="Lapidus A."/>
            <person name="Glavina del Rio T."/>
            <person name="Dalin E."/>
            <person name="Tice H."/>
            <person name="Bruce D."/>
            <person name="Goodwin L."/>
            <person name="Pitluck S."/>
            <person name="Sims D."/>
            <person name="Brettin T."/>
            <person name="Detter J.C."/>
            <person name="Han C."/>
            <person name="Kuske C.R."/>
            <person name="Schmutz J."/>
            <person name="Larimer F."/>
            <person name="Land M."/>
            <person name="Hauser L."/>
            <person name="Kyrpides N."/>
            <person name="Kim E."/>
            <person name="Zhao J.-S."/>
            <person name="Richardson P."/>
        </authorList>
    </citation>
    <scope>NUCLEOTIDE SEQUENCE [LARGE SCALE GENOMIC DNA]</scope>
    <source>
        <strain>HAW-EB4</strain>
    </source>
</reference>
<gene>
    <name evidence="1" type="primary">clpX</name>
    <name type="ordered locus">Shal_2767</name>
</gene>
<proteinExistence type="inferred from homology"/>
<evidence type="ECO:0000255" key="1">
    <source>
        <dbReference type="HAMAP-Rule" id="MF_00175"/>
    </source>
</evidence>
<evidence type="ECO:0000255" key="2">
    <source>
        <dbReference type="PROSITE-ProRule" id="PRU01250"/>
    </source>
</evidence>
<comment type="function">
    <text evidence="1">ATP-dependent specificity component of the Clp protease. It directs the protease to specific substrates. Can perform chaperone functions in the absence of ClpP.</text>
</comment>
<comment type="subunit">
    <text evidence="1">Component of the ClpX-ClpP complex. Forms a hexameric ring that, in the presence of ATP, binds to fourteen ClpP subunits assembled into a disk-like structure with a central cavity, resembling the structure of eukaryotic proteasomes.</text>
</comment>
<comment type="similarity">
    <text evidence="1">Belongs to the ClpX chaperone family.</text>
</comment>
<feature type="chain" id="PRO_1000077176" description="ATP-dependent Clp protease ATP-binding subunit ClpX">
    <location>
        <begin position="1"/>
        <end position="425"/>
    </location>
</feature>
<feature type="domain" description="ClpX-type ZB" evidence="2">
    <location>
        <begin position="4"/>
        <end position="57"/>
    </location>
</feature>
<feature type="binding site" evidence="2">
    <location>
        <position position="16"/>
    </location>
    <ligand>
        <name>Zn(2+)</name>
        <dbReference type="ChEBI" id="CHEBI:29105"/>
    </ligand>
</feature>
<feature type="binding site" evidence="2">
    <location>
        <position position="19"/>
    </location>
    <ligand>
        <name>Zn(2+)</name>
        <dbReference type="ChEBI" id="CHEBI:29105"/>
    </ligand>
</feature>
<feature type="binding site" evidence="2">
    <location>
        <position position="38"/>
    </location>
    <ligand>
        <name>Zn(2+)</name>
        <dbReference type="ChEBI" id="CHEBI:29105"/>
    </ligand>
</feature>
<feature type="binding site" evidence="2">
    <location>
        <position position="41"/>
    </location>
    <ligand>
        <name>Zn(2+)</name>
        <dbReference type="ChEBI" id="CHEBI:29105"/>
    </ligand>
</feature>
<feature type="binding site" evidence="1">
    <location>
        <begin position="121"/>
        <end position="128"/>
    </location>
    <ligand>
        <name>ATP</name>
        <dbReference type="ChEBI" id="CHEBI:30616"/>
    </ligand>
</feature>
<organism>
    <name type="scientific">Shewanella halifaxensis (strain HAW-EB4)</name>
    <dbReference type="NCBI Taxonomy" id="458817"/>
    <lineage>
        <taxon>Bacteria</taxon>
        <taxon>Pseudomonadati</taxon>
        <taxon>Pseudomonadota</taxon>
        <taxon>Gammaproteobacteria</taxon>
        <taxon>Alteromonadales</taxon>
        <taxon>Shewanellaceae</taxon>
        <taxon>Shewanella</taxon>
    </lineage>
</organism>
<accession>B0TLU8</accession>
<keyword id="KW-0067">ATP-binding</keyword>
<keyword id="KW-0143">Chaperone</keyword>
<keyword id="KW-0479">Metal-binding</keyword>
<keyword id="KW-0547">Nucleotide-binding</keyword>
<keyword id="KW-0862">Zinc</keyword>
<sequence>MGEDKGNGDGGKLLYCSFCGKSQHEVRKLIAGPSVYVCDECVELCNDIIREEIKEISPKQDQDKLPTPHELRAHLDDYVIGQDKAKKVLAVAVYNHYKRLRNATPKDGVELGKSNILLIGPTGSGKTLLAETLARVLDVPFTMADATTLTEAGYVGEDVENIIQKLLQKCDYDVEKAQRGIVYIDEIDKISRKSDNPSITRDVSGEGVQQALLKLIEGTIAAVPPQGGRKHPQQEFLQVDTSKILFICGGAFAGLEKVIEQRAHVGTGIGFGAEVKGEADKKSISDTLLQVEPEDLVKFGLIPEFIGRLPVLATLSELDDEALIQILSEPKNAITKQFAALFEMENVELEFRDDALKAIALKAQTRKTGARGLRSIVEGILLDIMYDLPSTDDVAKVVIDESVVKGESSPILIYANSEAQTASAE</sequence>
<dbReference type="EMBL" id="CP000931">
    <property type="protein sequence ID" value="ABZ77320.1"/>
    <property type="molecule type" value="Genomic_DNA"/>
</dbReference>
<dbReference type="RefSeq" id="WP_012277848.1">
    <property type="nucleotide sequence ID" value="NC_010334.1"/>
</dbReference>
<dbReference type="SMR" id="B0TLU8"/>
<dbReference type="STRING" id="458817.Shal_2767"/>
<dbReference type="KEGG" id="shl:Shal_2767"/>
<dbReference type="eggNOG" id="COG1219">
    <property type="taxonomic scope" value="Bacteria"/>
</dbReference>
<dbReference type="HOGENOM" id="CLU_014218_8_2_6"/>
<dbReference type="OrthoDB" id="9804062at2"/>
<dbReference type="Proteomes" id="UP000001317">
    <property type="component" value="Chromosome"/>
</dbReference>
<dbReference type="GO" id="GO:0009376">
    <property type="term" value="C:HslUV protease complex"/>
    <property type="evidence" value="ECO:0007669"/>
    <property type="project" value="TreeGrafter"/>
</dbReference>
<dbReference type="GO" id="GO:0005524">
    <property type="term" value="F:ATP binding"/>
    <property type="evidence" value="ECO:0007669"/>
    <property type="project" value="UniProtKB-UniRule"/>
</dbReference>
<dbReference type="GO" id="GO:0016887">
    <property type="term" value="F:ATP hydrolysis activity"/>
    <property type="evidence" value="ECO:0007669"/>
    <property type="project" value="InterPro"/>
</dbReference>
<dbReference type="GO" id="GO:0140662">
    <property type="term" value="F:ATP-dependent protein folding chaperone"/>
    <property type="evidence" value="ECO:0007669"/>
    <property type="project" value="InterPro"/>
</dbReference>
<dbReference type="GO" id="GO:0046983">
    <property type="term" value="F:protein dimerization activity"/>
    <property type="evidence" value="ECO:0007669"/>
    <property type="project" value="InterPro"/>
</dbReference>
<dbReference type="GO" id="GO:0051082">
    <property type="term" value="F:unfolded protein binding"/>
    <property type="evidence" value="ECO:0007669"/>
    <property type="project" value="UniProtKB-UniRule"/>
</dbReference>
<dbReference type="GO" id="GO:0008270">
    <property type="term" value="F:zinc ion binding"/>
    <property type="evidence" value="ECO:0007669"/>
    <property type="project" value="InterPro"/>
</dbReference>
<dbReference type="GO" id="GO:0051301">
    <property type="term" value="P:cell division"/>
    <property type="evidence" value="ECO:0007669"/>
    <property type="project" value="TreeGrafter"/>
</dbReference>
<dbReference type="GO" id="GO:0051603">
    <property type="term" value="P:proteolysis involved in protein catabolic process"/>
    <property type="evidence" value="ECO:0007669"/>
    <property type="project" value="TreeGrafter"/>
</dbReference>
<dbReference type="CDD" id="cd19497">
    <property type="entry name" value="RecA-like_ClpX"/>
    <property type="match status" value="1"/>
</dbReference>
<dbReference type="FunFam" id="1.10.8.60:FF:000002">
    <property type="entry name" value="ATP-dependent Clp protease ATP-binding subunit ClpX"/>
    <property type="match status" value="1"/>
</dbReference>
<dbReference type="FunFam" id="3.40.50.300:FF:000005">
    <property type="entry name" value="ATP-dependent Clp protease ATP-binding subunit ClpX"/>
    <property type="match status" value="1"/>
</dbReference>
<dbReference type="Gene3D" id="1.10.8.60">
    <property type="match status" value="1"/>
</dbReference>
<dbReference type="Gene3D" id="6.20.220.10">
    <property type="entry name" value="ClpX chaperone, C4-type zinc finger domain"/>
    <property type="match status" value="1"/>
</dbReference>
<dbReference type="Gene3D" id="3.40.50.300">
    <property type="entry name" value="P-loop containing nucleotide triphosphate hydrolases"/>
    <property type="match status" value="1"/>
</dbReference>
<dbReference type="HAMAP" id="MF_00175">
    <property type="entry name" value="ClpX"/>
    <property type="match status" value="1"/>
</dbReference>
<dbReference type="InterPro" id="IPR003593">
    <property type="entry name" value="AAA+_ATPase"/>
</dbReference>
<dbReference type="InterPro" id="IPR050052">
    <property type="entry name" value="ATP-dep_Clp_protease_ClpX"/>
</dbReference>
<dbReference type="InterPro" id="IPR003959">
    <property type="entry name" value="ATPase_AAA_core"/>
</dbReference>
<dbReference type="InterPro" id="IPR019489">
    <property type="entry name" value="Clp_ATPase_C"/>
</dbReference>
<dbReference type="InterPro" id="IPR004487">
    <property type="entry name" value="Clp_protease_ATP-bd_su_ClpX"/>
</dbReference>
<dbReference type="InterPro" id="IPR046425">
    <property type="entry name" value="ClpX_bact"/>
</dbReference>
<dbReference type="InterPro" id="IPR027417">
    <property type="entry name" value="P-loop_NTPase"/>
</dbReference>
<dbReference type="InterPro" id="IPR010603">
    <property type="entry name" value="Znf_CppX_C4"/>
</dbReference>
<dbReference type="InterPro" id="IPR038366">
    <property type="entry name" value="Znf_CppX_C4_sf"/>
</dbReference>
<dbReference type="NCBIfam" id="TIGR00382">
    <property type="entry name" value="clpX"/>
    <property type="match status" value="1"/>
</dbReference>
<dbReference type="NCBIfam" id="NF003745">
    <property type="entry name" value="PRK05342.1"/>
    <property type="match status" value="1"/>
</dbReference>
<dbReference type="PANTHER" id="PTHR48102:SF7">
    <property type="entry name" value="ATP-DEPENDENT CLP PROTEASE ATP-BINDING SUBUNIT CLPX-LIKE, MITOCHONDRIAL"/>
    <property type="match status" value="1"/>
</dbReference>
<dbReference type="PANTHER" id="PTHR48102">
    <property type="entry name" value="ATP-DEPENDENT CLP PROTEASE ATP-BINDING SUBUNIT CLPX-LIKE, MITOCHONDRIAL-RELATED"/>
    <property type="match status" value="1"/>
</dbReference>
<dbReference type="Pfam" id="PF07724">
    <property type="entry name" value="AAA_2"/>
    <property type="match status" value="1"/>
</dbReference>
<dbReference type="Pfam" id="PF10431">
    <property type="entry name" value="ClpB_D2-small"/>
    <property type="match status" value="1"/>
</dbReference>
<dbReference type="Pfam" id="PF06689">
    <property type="entry name" value="zf-C4_ClpX"/>
    <property type="match status" value="1"/>
</dbReference>
<dbReference type="SMART" id="SM00382">
    <property type="entry name" value="AAA"/>
    <property type="match status" value="1"/>
</dbReference>
<dbReference type="SMART" id="SM01086">
    <property type="entry name" value="ClpB_D2-small"/>
    <property type="match status" value="1"/>
</dbReference>
<dbReference type="SMART" id="SM00994">
    <property type="entry name" value="zf-C4_ClpX"/>
    <property type="match status" value="1"/>
</dbReference>
<dbReference type="SUPFAM" id="SSF57716">
    <property type="entry name" value="Glucocorticoid receptor-like (DNA-binding domain)"/>
    <property type="match status" value="1"/>
</dbReference>
<dbReference type="SUPFAM" id="SSF52540">
    <property type="entry name" value="P-loop containing nucleoside triphosphate hydrolases"/>
    <property type="match status" value="1"/>
</dbReference>
<dbReference type="PROSITE" id="PS51902">
    <property type="entry name" value="CLPX_ZB"/>
    <property type="match status" value="1"/>
</dbReference>